<organism>
    <name type="scientific">Salmonella enteritidis PT4 (strain P125109)</name>
    <dbReference type="NCBI Taxonomy" id="550537"/>
    <lineage>
        <taxon>Bacteria</taxon>
        <taxon>Pseudomonadati</taxon>
        <taxon>Pseudomonadota</taxon>
        <taxon>Gammaproteobacteria</taxon>
        <taxon>Enterobacterales</taxon>
        <taxon>Enterobacteriaceae</taxon>
        <taxon>Salmonella</taxon>
    </lineage>
</organism>
<name>DTD_SALEP</name>
<sequence length="145" mass="15927">MIALIQRVTRASVTVEDEVTGEIGPGLLVLLGVEKEDDEQKANRLCERVLGYRIFSDADGKMNLNVQQAGGSVLVVSQFTLAADTERGMRPSFSGGAAPDRAQALYEYFVERCRQQAIDTQTGRFAADMQVELVNDGPVTFWLQV</sequence>
<protein>
    <recommendedName>
        <fullName evidence="1">D-aminoacyl-tRNA deacylase</fullName>
        <shortName evidence="1">DTD</shortName>
        <ecNumber evidence="1">3.1.1.96</ecNumber>
    </recommendedName>
    <alternativeName>
        <fullName evidence="1">Gly-tRNA(Ala) deacylase</fullName>
    </alternativeName>
</protein>
<evidence type="ECO:0000255" key="1">
    <source>
        <dbReference type="HAMAP-Rule" id="MF_00518"/>
    </source>
</evidence>
<proteinExistence type="inferred from homology"/>
<keyword id="KW-0963">Cytoplasm</keyword>
<keyword id="KW-0378">Hydrolase</keyword>
<keyword id="KW-0694">RNA-binding</keyword>
<keyword id="KW-0820">tRNA-binding</keyword>
<gene>
    <name evidence="1" type="primary">dtd</name>
    <name type="ordered locus">SEN3816</name>
</gene>
<comment type="function">
    <text evidence="1">An aminoacyl-tRNA editing enzyme that deacylates mischarged D-aminoacyl-tRNAs. Also deacylates mischarged glycyl-tRNA(Ala), protecting cells against glycine mischarging by AlaRS. Acts via tRNA-based rather than protein-based catalysis; rejects L-amino acids rather than detecting D-amino acids in the active site. By recycling D-aminoacyl-tRNA to D-amino acids and free tRNA molecules, this enzyme counteracts the toxicity associated with the formation of D-aminoacyl-tRNA entities in vivo and helps enforce protein L-homochirality.</text>
</comment>
<comment type="catalytic activity">
    <reaction evidence="1">
        <text>glycyl-tRNA(Ala) + H2O = tRNA(Ala) + glycine + H(+)</text>
        <dbReference type="Rhea" id="RHEA:53744"/>
        <dbReference type="Rhea" id="RHEA-COMP:9657"/>
        <dbReference type="Rhea" id="RHEA-COMP:13640"/>
        <dbReference type="ChEBI" id="CHEBI:15377"/>
        <dbReference type="ChEBI" id="CHEBI:15378"/>
        <dbReference type="ChEBI" id="CHEBI:57305"/>
        <dbReference type="ChEBI" id="CHEBI:78442"/>
        <dbReference type="ChEBI" id="CHEBI:78522"/>
        <dbReference type="EC" id="3.1.1.96"/>
    </reaction>
</comment>
<comment type="catalytic activity">
    <reaction evidence="1">
        <text>a D-aminoacyl-tRNA + H2O = a tRNA + a D-alpha-amino acid + H(+)</text>
        <dbReference type="Rhea" id="RHEA:13953"/>
        <dbReference type="Rhea" id="RHEA-COMP:10123"/>
        <dbReference type="Rhea" id="RHEA-COMP:10124"/>
        <dbReference type="ChEBI" id="CHEBI:15377"/>
        <dbReference type="ChEBI" id="CHEBI:15378"/>
        <dbReference type="ChEBI" id="CHEBI:59871"/>
        <dbReference type="ChEBI" id="CHEBI:78442"/>
        <dbReference type="ChEBI" id="CHEBI:79333"/>
        <dbReference type="EC" id="3.1.1.96"/>
    </reaction>
</comment>
<comment type="subunit">
    <text evidence="1">Homodimer.</text>
</comment>
<comment type="subcellular location">
    <subcellularLocation>
        <location evidence="1">Cytoplasm</location>
    </subcellularLocation>
</comment>
<comment type="domain">
    <text evidence="1">A Gly-cisPro motif from one monomer fits into the active site of the other monomer to allow specific chiral rejection of L-amino acids.</text>
</comment>
<comment type="similarity">
    <text evidence="1">Belongs to the DTD family.</text>
</comment>
<accession>B5QWW2</accession>
<reference key="1">
    <citation type="journal article" date="2008" name="Genome Res.">
        <title>Comparative genome analysis of Salmonella enteritidis PT4 and Salmonella gallinarum 287/91 provides insights into evolutionary and host adaptation pathways.</title>
        <authorList>
            <person name="Thomson N.R."/>
            <person name="Clayton D.J."/>
            <person name="Windhorst D."/>
            <person name="Vernikos G."/>
            <person name="Davidson S."/>
            <person name="Churcher C."/>
            <person name="Quail M.A."/>
            <person name="Stevens M."/>
            <person name="Jones M.A."/>
            <person name="Watson M."/>
            <person name="Barron A."/>
            <person name="Layton A."/>
            <person name="Pickard D."/>
            <person name="Kingsley R.A."/>
            <person name="Bignell A."/>
            <person name="Clark L."/>
            <person name="Harris B."/>
            <person name="Ormond D."/>
            <person name="Abdellah Z."/>
            <person name="Brooks K."/>
            <person name="Cherevach I."/>
            <person name="Chillingworth T."/>
            <person name="Woodward J."/>
            <person name="Norberczak H."/>
            <person name="Lord A."/>
            <person name="Arrowsmith C."/>
            <person name="Jagels K."/>
            <person name="Moule S."/>
            <person name="Mungall K."/>
            <person name="Saunders M."/>
            <person name="Whitehead S."/>
            <person name="Chabalgoity J.A."/>
            <person name="Maskell D."/>
            <person name="Humphreys T."/>
            <person name="Roberts M."/>
            <person name="Barrow P.A."/>
            <person name="Dougan G."/>
            <person name="Parkhill J."/>
        </authorList>
    </citation>
    <scope>NUCLEOTIDE SEQUENCE [LARGE SCALE GENOMIC DNA]</scope>
    <source>
        <strain>P125109</strain>
    </source>
</reference>
<feature type="chain" id="PRO_1000127567" description="D-aminoacyl-tRNA deacylase">
    <location>
        <begin position="1"/>
        <end position="145"/>
    </location>
</feature>
<feature type="short sequence motif" description="Gly-cisPro motif, important for rejection of L-amino acids" evidence="1">
    <location>
        <begin position="137"/>
        <end position="138"/>
    </location>
</feature>
<dbReference type="EC" id="3.1.1.96" evidence="1"/>
<dbReference type="EMBL" id="AM933172">
    <property type="protein sequence ID" value="CAR35390.1"/>
    <property type="molecule type" value="Genomic_DNA"/>
</dbReference>
<dbReference type="RefSeq" id="WP_000560968.1">
    <property type="nucleotide sequence ID" value="NC_011294.1"/>
</dbReference>
<dbReference type="SMR" id="B5QWW2"/>
<dbReference type="KEGG" id="set:SEN3816"/>
<dbReference type="HOGENOM" id="CLU_076901_1_0_6"/>
<dbReference type="Proteomes" id="UP000000613">
    <property type="component" value="Chromosome"/>
</dbReference>
<dbReference type="GO" id="GO:0005737">
    <property type="term" value="C:cytoplasm"/>
    <property type="evidence" value="ECO:0007669"/>
    <property type="project" value="UniProtKB-SubCell"/>
</dbReference>
<dbReference type="GO" id="GO:0051500">
    <property type="term" value="F:D-tyrosyl-tRNA(Tyr) deacylase activity"/>
    <property type="evidence" value="ECO:0007669"/>
    <property type="project" value="TreeGrafter"/>
</dbReference>
<dbReference type="GO" id="GO:0106026">
    <property type="term" value="F:Gly-tRNA(Ala) deacylase activity"/>
    <property type="evidence" value="ECO:0007669"/>
    <property type="project" value="UniProtKB-UniRule"/>
</dbReference>
<dbReference type="GO" id="GO:0043908">
    <property type="term" value="F:Ser(Gly)-tRNA(Ala) hydrolase activity"/>
    <property type="evidence" value="ECO:0007669"/>
    <property type="project" value="UniProtKB-UniRule"/>
</dbReference>
<dbReference type="GO" id="GO:0000049">
    <property type="term" value="F:tRNA binding"/>
    <property type="evidence" value="ECO:0007669"/>
    <property type="project" value="UniProtKB-UniRule"/>
</dbReference>
<dbReference type="GO" id="GO:0019478">
    <property type="term" value="P:D-amino acid catabolic process"/>
    <property type="evidence" value="ECO:0007669"/>
    <property type="project" value="UniProtKB-UniRule"/>
</dbReference>
<dbReference type="CDD" id="cd00563">
    <property type="entry name" value="Dtyr_deacylase"/>
    <property type="match status" value="1"/>
</dbReference>
<dbReference type="FunFam" id="3.50.80.10:FF:000001">
    <property type="entry name" value="D-aminoacyl-tRNA deacylase"/>
    <property type="match status" value="1"/>
</dbReference>
<dbReference type="Gene3D" id="3.50.80.10">
    <property type="entry name" value="D-tyrosyl-tRNA(Tyr) deacylase"/>
    <property type="match status" value="1"/>
</dbReference>
<dbReference type="HAMAP" id="MF_00518">
    <property type="entry name" value="Deacylase_Dtd"/>
    <property type="match status" value="1"/>
</dbReference>
<dbReference type="InterPro" id="IPR003732">
    <property type="entry name" value="Daa-tRNA_deacyls_DTD"/>
</dbReference>
<dbReference type="InterPro" id="IPR023509">
    <property type="entry name" value="DTD-like_sf"/>
</dbReference>
<dbReference type="NCBIfam" id="TIGR00256">
    <property type="entry name" value="D-aminoacyl-tRNA deacylase"/>
    <property type="match status" value="1"/>
</dbReference>
<dbReference type="PANTHER" id="PTHR10472:SF5">
    <property type="entry name" value="D-AMINOACYL-TRNA DEACYLASE 1"/>
    <property type="match status" value="1"/>
</dbReference>
<dbReference type="PANTHER" id="PTHR10472">
    <property type="entry name" value="D-TYROSYL-TRNA TYR DEACYLASE"/>
    <property type="match status" value="1"/>
</dbReference>
<dbReference type="Pfam" id="PF02580">
    <property type="entry name" value="Tyr_Deacylase"/>
    <property type="match status" value="1"/>
</dbReference>
<dbReference type="SUPFAM" id="SSF69500">
    <property type="entry name" value="DTD-like"/>
    <property type="match status" value="1"/>
</dbReference>